<name>ACT3_ORYSJ</name>
<feature type="chain" id="PRO_0000088972" description="Actin-3">
    <location>
        <begin position="1"/>
        <end position="377"/>
    </location>
</feature>
<dbReference type="EC" id="3.6.4.-" evidence="1"/>
<dbReference type="EMBL" id="AC092557">
    <property type="protein sequence ID" value="AAR88568.1"/>
    <property type="molecule type" value="Genomic_DNA"/>
</dbReference>
<dbReference type="EMBL" id="DP000009">
    <property type="protein sequence ID" value="ABF99754.1"/>
    <property type="molecule type" value="Genomic_DNA"/>
</dbReference>
<dbReference type="EMBL" id="AP008209">
    <property type="protein sequence ID" value="BAF13736.1"/>
    <property type="molecule type" value="Genomic_DNA"/>
</dbReference>
<dbReference type="EMBL" id="AP014959">
    <property type="protein sequence ID" value="BAS87253.1"/>
    <property type="molecule type" value="Genomic_DNA"/>
</dbReference>
<dbReference type="EMBL" id="CM000140">
    <property type="protein sequence ID" value="EEE60254.1"/>
    <property type="molecule type" value="Genomic_DNA"/>
</dbReference>
<dbReference type="EMBL" id="AK063598">
    <property type="protein sequence ID" value="BAG88787.1"/>
    <property type="molecule type" value="mRNA"/>
</dbReference>
<dbReference type="RefSeq" id="XP_015629761.1">
    <property type="nucleotide sequence ID" value="XM_015774275.1"/>
</dbReference>
<dbReference type="SMR" id="Q10AZ4"/>
<dbReference type="FunCoup" id="Q10AZ4">
    <property type="interactions" value="2382"/>
</dbReference>
<dbReference type="STRING" id="39947.Q10AZ4"/>
<dbReference type="PaxDb" id="39947-Q10AZ4"/>
<dbReference type="EnsemblPlants" id="Os03t0836000-01">
    <property type="protein sequence ID" value="Os03t0836000-01"/>
    <property type="gene ID" value="Os03g0836000"/>
</dbReference>
<dbReference type="Gramene" id="Os03t0836000-01">
    <property type="protein sequence ID" value="Os03t0836000-01"/>
    <property type="gene ID" value="Os03g0836000"/>
</dbReference>
<dbReference type="KEGG" id="dosa:Os03g0836000"/>
<dbReference type="eggNOG" id="KOG0676">
    <property type="taxonomic scope" value="Eukaryota"/>
</dbReference>
<dbReference type="HOGENOM" id="CLU_027965_0_2_1"/>
<dbReference type="InParanoid" id="Q10AZ4"/>
<dbReference type="OMA" id="FHAPAMY"/>
<dbReference type="OrthoDB" id="503831at2759"/>
<dbReference type="Proteomes" id="UP000000763">
    <property type="component" value="Chromosome 3"/>
</dbReference>
<dbReference type="Proteomes" id="UP000007752">
    <property type="component" value="Chromosome 3"/>
</dbReference>
<dbReference type="Proteomes" id="UP000059680">
    <property type="component" value="Chromosome 3"/>
</dbReference>
<dbReference type="GO" id="GO:0015629">
    <property type="term" value="C:actin cytoskeleton"/>
    <property type="evidence" value="ECO:0000318"/>
    <property type="project" value="GO_Central"/>
</dbReference>
<dbReference type="GO" id="GO:0005737">
    <property type="term" value="C:cytoplasm"/>
    <property type="evidence" value="ECO:0007669"/>
    <property type="project" value="UniProtKB-KW"/>
</dbReference>
<dbReference type="GO" id="GO:0005524">
    <property type="term" value="F:ATP binding"/>
    <property type="evidence" value="ECO:0007669"/>
    <property type="project" value="UniProtKB-KW"/>
</dbReference>
<dbReference type="GO" id="GO:0016787">
    <property type="term" value="F:hydrolase activity"/>
    <property type="evidence" value="ECO:0007669"/>
    <property type="project" value="UniProtKB-KW"/>
</dbReference>
<dbReference type="CDD" id="cd10224">
    <property type="entry name" value="ASKHA_NBD_actin"/>
    <property type="match status" value="1"/>
</dbReference>
<dbReference type="FunFam" id="3.30.420.40:FF:000291">
    <property type="entry name" value="Actin, alpha skeletal muscle"/>
    <property type="match status" value="1"/>
</dbReference>
<dbReference type="FunFam" id="3.90.640.10:FF:000001">
    <property type="entry name" value="Actin, muscle"/>
    <property type="match status" value="1"/>
</dbReference>
<dbReference type="FunFam" id="3.30.420.40:FF:000404">
    <property type="entry name" value="Major actin"/>
    <property type="match status" value="1"/>
</dbReference>
<dbReference type="FunFam" id="3.30.420.40:FF:000058">
    <property type="entry name" value="Putative actin-related protein 5"/>
    <property type="match status" value="1"/>
</dbReference>
<dbReference type="Gene3D" id="3.30.420.40">
    <property type="match status" value="2"/>
</dbReference>
<dbReference type="Gene3D" id="3.90.640.10">
    <property type="entry name" value="Actin, Chain A, domain 4"/>
    <property type="match status" value="1"/>
</dbReference>
<dbReference type="InterPro" id="IPR004000">
    <property type="entry name" value="Actin"/>
</dbReference>
<dbReference type="InterPro" id="IPR020902">
    <property type="entry name" value="Actin/actin-like_CS"/>
</dbReference>
<dbReference type="InterPro" id="IPR004001">
    <property type="entry name" value="Actin_CS"/>
</dbReference>
<dbReference type="InterPro" id="IPR043129">
    <property type="entry name" value="ATPase_NBD"/>
</dbReference>
<dbReference type="PANTHER" id="PTHR11937">
    <property type="entry name" value="ACTIN"/>
    <property type="match status" value="1"/>
</dbReference>
<dbReference type="Pfam" id="PF00022">
    <property type="entry name" value="Actin"/>
    <property type="match status" value="1"/>
</dbReference>
<dbReference type="PRINTS" id="PR00190">
    <property type="entry name" value="ACTIN"/>
</dbReference>
<dbReference type="SMART" id="SM00268">
    <property type="entry name" value="ACTIN"/>
    <property type="match status" value="1"/>
</dbReference>
<dbReference type="SUPFAM" id="SSF53067">
    <property type="entry name" value="Actin-like ATPase domain"/>
    <property type="match status" value="2"/>
</dbReference>
<dbReference type="PROSITE" id="PS00406">
    <property type="entry name" value="ACTINS_1"/>
    <property type="match status" value="1"/>
</dbReference>
<dbReference type="PROSITE" id="PS00432">
    <property type="entry name" value="ACTINS_2"/>
    <property type="match status" value="1"/>
</dbReference>
<dbReference type="PROSITE" id="PS01132">
    <property type="entry name" value="ACTINS_ACT_LIKE"/>
    <property type="match status" value="1"/>
</dbReference>
<protein>
    <recommendedName>
        <fullName>Actin-3</fullName>
        <ecNumber evidence="1">3.6.4.-</ecNumber>
    </recommendedName>
</protein>
<gene>
    <name type="primary">ACT3</name>
    <name type="synonym">AC3</name>
    <name type="synonym">RAC3</name>
    <name type="ordered locus">Os03g0836000</name>
    <name type="ordered locus">LOC_Os03g61970</name>
    <name evidence="3" type="ORF">OsJ_13270</name>
    <name type="ORF">OSJNBa0096I06.10</name>
</gene>
<proteinExistence type="evidence at transcript level"/>
<comment type="function">
    <text>Actins are highly conserved proteins that are involved in various types of cell motility and are ubiquitously expressed in all eukaryotic cells.</text>
</comment>
<comment type="function">
    <text>Essential component of cell cytoskeleton; plays an important role in cytoplasmic streaming, cell shape determination, cell division, organelle movement and extension growth.</text>
</comment>
<comment type="catalytic activity">
    <reaction evidence="1">
        <text>ATP + H2O = ADP + phosphate + H(+)</text>
        <dbReference type="Rhea" id="RHEA:13065"/>
        <dbReference type="ChEBI" id="CHEBI:15377"/>
        <dbReference type="ChEBI" id="CHEBI:15378"/>
        <dbReference type="ChEBI" id="CHEBI:30616"/>
        <dbReference type="ChEBI" id="CHEBI:43474"/>
        <dbReference type="ChEBI" id="CHEBI:456216"/>
    </reaction>
</comment>
<comment type="subcellular location">
    <subcellularLocation>
        <location>Cytoplasm</location>
        <location>Cytoskeleton</location>
    </subcellularLocation>
</comment>
<comment type="miscellaneous">
    <text>There are at least eight actin genes in rice.</text>
</comment>
<comment type="similarity">
    <text evidence="2">Belongs to the actin family.</text>
</comment>
<accession>Q10AZ4</accession>
<accession>B7E8U0</accession>
<accession>P17299</accession>
<accession>Q75LK6</accession>
<sequence length="377" mass="41706">MADGEDIQPLVCDNGTGMVKAGFAGDDAPRAVFPSIVGRPRHTGVMVGMGQKDAYVGDEAQSKRGILTLKYPIEHGIVNNWDDMEKIWHHTFYNELRVAPEEHPILLTEAPLNPKANREKMTQIMFETFNAPAMYVAIQAVLSLYASGRTTGIVLDSGDGVTHTVPIYEGYALPHAILRLDLAGRDLTDCLMKILTERGYSFTTTAEREIVRDIKEKLAYIALDYEQELETAKSSSSVEKSYELPDGQVITIGAERFRCPEVLFQPSLIGMEAPGIHETTYNSIMKCDVDIRKDLYGNIVLSGGTTMFPGIADRMSKEITALAPSSMKIKVVAPPERKYSVWIGGSILASLSTFQQMWISKGEYDESGPSIVHRKCF</sequence>
<organism>
    <name type="scientific">Oryza sativa subsp. japonica</name>
    <name type="common">Rice</name>
    <dbReference type="NCBI Taxonomy" id="39947"/>
    <lineage>
        <taxon>Eukaryota</taxon>
        <taxon>Viridiplantae</taxon>
        <taxon>Streptophyta</taxon>
        <taxon>Embryophyta</taxon>
        <taxon>Tracheophyta</taxon>
        <taxon>Spermatophyta</taxon>
        <taxon>Magnoliopsida</taxon>
        <taxon>Liliopsida</taxon>
        <taxon>Poales</taxon>
        <taxon>Poaceae</taxon>
        <taxon>BOP clade</taxon>
        <taxon>Oryzoideae</taxon>
        <taxon>Oryzeae</taxon>
        <taxon>Oryzinae</taxon>
        <taxon>Oryza</taxon>
        <taxon>Oryza sativa</taxon>
    </lineage>
</organism>
<reference key="1">
    <citation type="journal article" date="2005" name="Genome Res.">
        <title>Sequence, annotation, and analysis of synteny between rice chromosome 3 and diverged grass species.</title>
        <authorList>
            <consortium name="The rice chromosome 3 sequencing consortium"/>
            <person name="Buell C.R."/>
            <person name="Yuan Q."/>
            <person name="Ouyang S."/>
            <person name="Liu J."/>
            <person name="Zhu W."/>
            <person name="Wang A."/>
            <person name="Maiti R."/>
            <person name="Haas B."/>
            <person name="Wortman J."/>
            <person name="Pertea M."/>
            <person name="Jones K.M."/>
            <person name="Kim M."/>
            <person name="Overton L."/>
            <person name="Tsitrin T."/>
            <person name="Fadrosh D."/>
            <person name="Bera J."/>
            <person name="Weaver B."/>
            <person name="Jin S."/>
            <person name="Johri S."/>
            <person name="Reardon M."/>
            <person name="Webb K."/>
            <person name="Hill J."/>
            <person name="Moffat K."/>
            <person name="Tallon L."/>
            <person name="Van Aken S."/>
            <person name="Lewis M."/>
            <person name="Utterback T."/>
            <person name="Feldblyum T."/>
            <person name="Zismann V."/>
            <person name="Iobst S."/>
            <person name="Hsiao J."/>
            <person name="de Vazeille A.R."/>
            <person name="Salzberg S.L."/>
            <person name="White O."/>
            <person name="Fraser C.M."/>
            <person name="Yu Y."/>
            <person name="Kim H."/>
            <person name="Rambo T."/>
            <person name="Currie J."/>
            <person name="Collura K."/>
            <person name="Kernodle-Thompson S."/>
            <person name="Wei F."/>
            <person name="Kudrna K."/>
            <person name="Ammiraju J.S.S."/>
            <person name="Luo M."/>
            <person name="Goicoechea J.L."/>
            <person name="Wing R.A."/>
            <person name="Henry D."/>
            <person name="Oates R."/>
            <person name="Palmer M."/>
            <person name="Pries G."/>
            <person name="Saski C."/>
            <person name="Simmons J."/>
            <person name="Soderlund C."/>
            <person name="Nelson W."/>
            <person name="de la Bastide M."/>
            <person name="Spiegel L."/>
            <person name="Nascimento L."/>
            <person name="Huang E."/>
            <person name="Preston R."/>
            <person name="Zutavern T."/>
            <person name="Palmer L."/>
            <person name="O'Shaughnessy A."/>
            <person name="Dike S."/>
            <person name="McCombie W.R."/>
            <person name="Minx P."/>
            <person name="Cordum H."/>
            <person name="Wilson R."/>
            <person name="Jin W."/>
            <person name="Lee H.R."/>
            <person name="Jiang J."/>
            <person name="Jackson S."/>
        </authorList>
    </citation>
    <scope>NUCLEOTIDE SEQUENCE [LARGE SCALE GENOMIC DNA]</scope>
    <source>
        <strain>cv. Nipponbare</strain>
    </source>
</reference>
<reference key="2">
    <citation type="journal article" date="2005" name="Nature">
        <title>The map-based sequence of the rice genome.</title>
        <authorList>
            <consortium name="International rice genome sequencing project (IRGSP)"/>
        </authorList>
    </citation>
    <scope>NUCLEOTIDE SEQUENCE [LARGE SCALE GENOMIC DNA]</scope>
    <source>
        <strain>cv. Nipponbare</strain>
    </source>
</reference>
<reference key="3">
    <citation type="journal article" date="2008" name="Nucleic Acids Res.">
        <title>The rice annotation project database (RAP-DB): 2008 update.</title>
        <authorList>
            <consortium name="The rice annotation project (RAP)"/>
        </authorList>
    </citation>
    <scope>GENOME REANNOTATION</scope>
    <source>
        <strain>cv. Nipponbare</strain>
    </source>
</reference>
<reference key="4">
    <citation type="journal article" date="2013" name="Rice">
        <title>Improvement of the Oryza sativa Nipponbare reference genome using next generation sequence and optical map data.</title>
        <authorList>
            <person name="Kawahara Y."/>
            <person name="de la Bastide M."/>
            <person name="Hamilton J.P."/>
            <person name="Kanamori H."/>
            <person name="McCombie W.R."/>
            <person name="Ouyang S."/>
            <person name="Schwartz D.C."/>
            <person name="Tanaka T."/>
            <person name="Wu J."/>
            <person name="Zhou S."/>
            <person name="Childs K.L."/>
            <person name="Davidson R.M."/>
            <person name="Lin H."/>
            <person name="Quesada-Ocampo L."/>
            <person name="Vaillancourt B."/>
            <person name="Sakai H."/>
            <person name="Lee S.S."/>
            <person name="Kim J."/>
            <person name="Numa H."/>
            <person name="Itoh T."/>
            <person name="Buell C.R."/>
            <person name="Matsumoto T."/>
        </authorList>
    </citation>
    <scope>GENOME REANNOTATION</scope>
    <source>
        <strain>cv. Nipponbare</strain>
    </source>
</reference>
<reference key="5">
    <citation type="journal article" date="2005" name="PLoS Biol.">
        <title>The genomes of Oryza sativa: a history of duplications.</title>
        <authorList>
            <person name="Yu J."/>
            <person name="Wang J."/>
            <person name="Lin W."/>
            <person name="Li S."/>
            <person name="Li H."/>
            <person name="Zhou J."/>
            <person name="Ni P."/>
            <person name="Dong W."/>
            <person name="Hu S."/>
            <person name="Zeng C."/>
            <person name="Zhang J."/>
            <person name="Zhang Y."/>
            <person name="Li R."/>
            <person name="Xu Z."/>
            <person name="Li S."/>
            <person name="Li X."/>
            <person name="Zheng H."/>
            <person name="Cong L."/>
            <person name="Lin L."/>
            <person name="Yin J."/>
            <person name="Geng J."/>
            <person name="Li G."/>
            <person name="Shi J."/>
            <person name="Liu J."/>
            <person name="Lv H."/>
            <person name="Li J."/>
            <person name="Wang J."/>
            <person name="Deng Y."/>
            <person name="Ran L."/>
            <person name="Shi X."/>
            <person name="Wang X."/>
            <person name="Wu Q."/>
            <person name="Li C."/>
            <person name="Ren X."/>
            <person name="Wang J."/>
            <person name="Wang X."/>
            <person name="Li D."/>
            <person name="Liu D."/>
            <person name="Zhang X."/>
            <person name="Ji Z."/>
            <person name="Zhao W."/>
            <person name="Sun Y."/>
            <person name="Zhang Z."/>
            <person name="Bao J."/>
            <person name="Han Y."/>
            <person name="Dong L."/>
            <person name="Ji J."/>
            <person name="Chen P."/>
            <person name="Wu S."/>
            <person name="Liu J."/>
            <person name="Xiao Y."/>
            <person name="Bu D."/>
            <person name="Tan J."/>
            <person name="Yang L."/>
            <person name="Ye C."/>
            <person name="Zhang J."/>
            <person name="Xu J."/>
            <person name="Zhou Y."/>
            <person name="Yu Y."/>
            <person name="Zhang B."/>
            <person name="Zhuang S."/>
            <person name="Wei H."/>
            <person name="Liu B."/>
            <person name="Lei M."/>
            <person name="Yu H."/>
            <person name="Li Y."/>
            <person name="Xu H."/>
            <person name="Wei S."/>
            <person name="He X."/>
            <person name="Fang L."/>
            <person name="Zhang Z."/>
            <person name="Zhang Y."/>
            <person name="Huang X."/>
            <person name="Su Z."/>
            <person name="Tong W."/>
            <person name="Li J."/>
            <person name="Tong Z."/>
            <person name="Li S."/>
            <person name="Ye J."/>
            <person name="Wang L."/>
            <person name="Fang L."/>
            <person name="Lei T."/>
            <person name="Chen C.-S."/>
            <person name="Chen H.-C."/>
            <person name="Xu Z."/>
            <person name="Li H."/>
            <person name="Huang H."/>
            <person name="Zhang F."/>
            <person name="Xu H."/>
            <person name="Li N."/>
            <person name="Zhao C."/>
            <person name="Li S."/>
            <person name="Dong L."/>
            <person name="Huang Y."/>
            <person name="Li L."/>
            <person name="Xi Y."/>
            <person name="Qi Q."/>
            <person name="Li W."/>
            <person name="Zhang B."/>
            <person name="Hu W."/>
            <person name="Zhang Y."/>
            <person name="Tian X."/>
            <person name="Jiao Y."/>
            <person name="Liang X."/>
            <person name="Jin J."/>
            <person name="Gao L."/>
            <person name="Zheng W."/>
            <person name="Hao B."/>
            <person name="Liu S.-M."/>
            <person name="Wang W."/>
            <person name="Yuan L."/>
            <person name="Cao M."/>
            <person name="McDermott J."/>
            <person name="Samudrala R."/>
            <person name="Wang J."/>
            <person name="Wong G.K.-S."/>
            <person name="Yang H."/>
        </authorList>
    </citation>
    <scope>NUCLEOTIDE SEQUENCE [LARGE SCALE GENOMIC DNA]</scope>
    <source>
        <strain>cv. Nipponbare</strain>
    </source>
</reference>
<reference key="6">
    <citation type="journal article" date="2003" name="Science">
        <title>Collection, mapping, and annotation of over 28,000 cDNA clones from japonica rice.</title>
        <authorList>
            <consortium name="The rice full-length cDNA consortium"/>
        </authorList>
    </citation>
    <scope>NUCLEOTIDE SEQUENCE [LARGE SCALE MRNA]</scope>
    <source>
        <strain>cv. Nipponbare</strain>
    </source>
</reference>
<keyword id="KW-0067">ATP-binding</keyword>
<keyword id="KW-0963">Cytoplasm</keyword>
<keyword id="KW-0206">Cytoskeleton</keyword>
<keyword id="KW-0378">Hydrolase</keyword>
<keyword id="KW-0547">Nucleotide-binding</keyword>
<keyword id="KW-1185">Reference proteome</keyword>
<evidence type="ECO:0000250" key="1">
    <source>
        <dbReference type="UniProtKB" id="P68137"/>
    </source>
</evidence>
<evidence type="ECO:0000305" key="2"/>
<evidence type="ECO:0000312" key="3">
    <source>
        <dbReference type="EMBL" id="EEE60254.1"/>
    </source>
</evidence>